<protein>
    <recommendedName>
        <fullName>Probable inactive purple acid phosphatase 14</fullName>
    </recommendedName>
</protein>
<sequence length="401" mass="45576">MEETRRRFVISSVLSVSLIYLCLSTCHVSAFDFGRRQLRFNTDGRFKILQVSDMHYGFGKETQCSDVSPAEFPYCSDLNTTSFLQRTIASEKPDLIVFSGDNVYGLCETSDVAKSMDMAFAPAIESGIPWVAILGNHDQESDMTRETMMKYIMKLPNSLSQVNPPDAWLYQIDGFGNYNLQIEGPFGSPLFFKSILNLYLLDGGSYTKLDGFGYKYDWVKTSQQNWYEHTSKWLEMEHKRWPFPQNSTAPGLVYLHIPMPEFALFNKSTEMTGVRQESTCSPPINSGFFTKLVERGEVKGVFSGHDHVNDFCAELHGINLCYAGGAGYHGYGQVGWARRVRVVEAQLEKTMYGRWGAVDTIKTWKRLDDKNHSLIDTQLLWTKNTTLEPNFGFSCSTIPQH</sequence>
<organism>
    <name type="scientific">Arabidopsis thaliana</name>
    <name type="common">Mouse-ear cress</name>
    <dbReference type="NCBI Taxonomy" id="3702"/>
    <lineage>
        <taxon>Eukaryota</taxon>
        <taxon>Viridiplantae</taxon>
        <taxon>Streptophyta</taxon>
        <taxon>Embryophyta</taxon>
        <taxon>Tracheophyta</taxon>
        <taxon>Spermatophyta</taxon>
        <taxon>Magnoliopsida</taxon>
        <taxon>eudicotyledons</taxon>
        <taxon>Gunneridae</taxon>
        <taxon>Pentapetalae</taxon>
        <taxon>rosids</taxon>
        <taxon>malvids</taxon>
        <taxon>Brassicales</taxon>
        <taxon>Brassicaceae</taxon>
        <taxon>Camelineae</taxon>
        <taxon>Arabidopsis</taxon>
    </lineage>
</organism>
<dbReference type="EMBL" id="AY842023">
    <property type="protein sequence ID" value="AAW29948.1"/>
    <property type="molecule type" value="mRNA"/>
</dbReference>
<dbReference type="EMBL" id="AC004411">
    <property type="protein sequence ID" value="AAC34232.2"/>
    <property type="status" value="ALT_SEQ"/>
    <property type="molecule type" value="Genomic_DNA"/>
</dbReference>
<dbReference type="EMBL" id="AC005310">
    <property type="protein sequence ID" value="AAM15023.1"/>
    <property type="status" value="ALT_SEQ"/>
    <property type="molecule type" value="Genomic_DNA"/>
</dbReference>
<dbReference type="EMBL" id="CP002685">
    <property type="protein sequence ID" value="AEC10766.1"/>
    <property type="molecule type" value="Genomic_DNA"/>
</dbReference>
<dbReference type="EMBL" id="CP002685">
    <property type="protein sequence ID" value="AEC10767.1"/>
    <property type="molecule type" value="Genomic_DNA"/>
</dbReference>
<dbReference type="EMBL" id="AY261790">
    <property type="protein sequence ID" value="AAP21684.1"/>
    <property type="molecule type" value="mRNA"/>
</dbReference>
<dbReference type="EMBL" id="AY261791">
    <property type="protein sequence ID" value="AAP21685.1"/>
    <property type="molecule type" value="mRNA"/>
</dbReference>
<dbReference type="EMBL" id="AY649304">
    <property type="protein sequence ID" value="AAT69221.1"/>
    <property type="molecule type" value="mRNA"/>
</dbReference>
<dbReference type="PIR" id="D84908">
    <property type="entry name" value="D84908"/>
</dbReference>
<dbReference type="PIR" id="T02689">
    <property type="entry name" value="T02689"/>
</dbReference>
<dbReference type="RefSeq" id="NP_182211.2">
    <molecule id="Q84LR6-1"/>
    <property type="nucleotide sequence ID" value="NM_130255.2"/>
</dbReference>
<dbReference type="RefSeq" id="NP_973704.1">
    <molecule id="Q84LR6-3"/>
    <property type="nucleotide sequence ID" value="NM_201975.3"/>
</dbReference>
<dbReference type="FunCoup" id="Q84LR6">
    <property type="interactions" value="83"/>
</dbReference>
<dbReference type="STRING" id="3702.Q84LR6"/>
<dbReference type="GlyCosmos" id="Q84LR6">
    <property type="glycosylation" value="5 sites, No reported glycans"/>
</dbReference>
<dbReference type="GlyGen" id="Q84LR6">
    <property type="glycosylation" value="5 sites"/>
</dbReference>
<dbReference type="PaxDb" id="3702-AT2G46880.1"/>
<dbReference type="ProteomicsDB" id="249014">
    <molecule id="Q84LR6-1"/>
</dbReference>
<dbReference type="EnsemblPlants" id="AT2G46880.1">
    <molecule id="Q84LR6-1"/>
    <property type="protein sequence ID" value="AT2G46880.1"/>
    <property type="gene ID" value="AT2G46880"/>
</dbReference>
<dbReference type="EnsemblPlants" id="AT2G46880.2">
    <molecule id="Q84LR6-3"/>
    <property type="protein sequence ID" value="AT2G46880.2"/>
    <property type="gene ID" value="AT2G46880"/>
</dbReference>
<dbReference type="GeneID" id="819301"/>
<dbReference type="Gramene" id="AT2G46880.1">
    <molecule id="Q84LR6-1"/>
    <property type="protein sequence ID" value="AT2G46880.1"/>
    <property type="gene ID" value="AT2G46880"/>
</dbReference>
<dbReference type="Gramene" id="AT2G46880.2">
    <molecule id="Q84LR6-3"/>
    <property type="protein sequence ID" value="AT2G46880.2"/>
    <property type="gene ID" value="AT2G46880"/>
</dbReference>
<dbReference type="KEGG" id="ath:AT2G46880"/>
<dbReference type="Araport" id="AT2G46880"/>
<dbReference type="TAIR" id="AT2G46880">
    <property type="gene designation" value="PAP14"/>
</dbReference>
<dbReference type="eggNOG" id="KOG1432">
    <property type="taxonomic scope" value="Eukaryota"/>
</dbReference>
<dbReference type="InParanoid" id="Q84LR6"/>
<dbReference type="OMA" id="HTNECCI"/>
<dbReference type="PhylomeDB" id="Q84LR6"/>
<dbReference type="PRO" id="PR:Q84LR6"/>
<dbReference type="Proteomes" id="UP000006548">
    <property type="component" value="Chromosome 2"/>
</dbReference>
<dbReference type="ExpressionAtlas" id="Q84LR6">
    <property type="expression patterns" value="baseline and differential"/>
</dbReference>
<dbReference type="GO" id="GO:0005576">
    <property type="term" value="C:extracellular region"/>
    <property type="evidence" value="ECO:0007669"/>
    <property type="project" value="UniProtKB-SubCell"/>
</dbReference>
<dbReference type="GO" id="GO:0009506">
    <property type="term" value="C:plasmodesma"/>
    <property type="evidence" value="ECO:0007005"/>
    <property type="project" value="TAIR"/>
</dbReference>
<dbReference type="GO" id="GO:0003993">
    <property type="term" value="F:acid phosphatase activity"/>
    <property type="evidence" value="ECO:0000250"/>
    <property type="project" value="TAIR"/>
</dbReference>
<dbReference type="GO" id="GO:0046872">
    <property type="term" value="F:metal ion binding"/>
    <property type="evidence" value="ECO:0007669"/>
    <property type="project" value="UniProtKB-KW"/>
</dbReference>
<dbReference type="CDD" id="cd07383">
    <property type="entry name" value="MPP_Dcr2"/>
    <property type="match status" value="1"/>
</dbReference>
<dbReference type="Gene3D" id="3.60.21.10">
    <property type="match status" value="1"/>
</dbReference>
<dbReference type="InterPro" id="IPR004843">
    <property type="entry name" value="Calcineurin-like_PHP_ApaH"/>
</dbReference>
<dbReference type="InterPro" id="IPR029052">
    <property type="entry name" value="Metallo-depent_PP-like"/>
</dbReference>
<dbReference type="InterPro" id="IPR011230">
    <property type="entry name" value="PAP14/16/28/29"/>
</dbReference>
<dbReference type="PANTHER" id="PTHR32440:SF25">
    <property type="entry name" value="INACTIVE PURPLE ACID PHOSPHATASE 14-RELATED"/>
    <property type="match status" value="1"/>
</dbReference>
<dbReference type="PANTHER" id="PTHR32440">
    <property type="entry name" value="PHOSPHATASE DCR2-RELATED-RELATED"/>
    <property type="match status" value="1"/>
</dbReference>
<dbReference type="Pfam" id="PF00149">
    <property type="entry name" value="Metallophos"/>
    <property type="match status" value="1"/>
</dbReference>
<dbReference type="PIRSF" id="PIRSF030250">
    <property type="entry name" value="Ptase_At2g46880"/>
    <property type="match status" value="1"/>
</dbReference>
<dbReference type="SUPFAM" id="SSF56300">
    <property type="entry name" value="Metallo-dependent phosphatases"/>
    <property type="match status" value="1"/>
</dbReference>
<comment type="cofactor">
    <cofactor evidence="1">
        <name>Fe cation</name>
        <dbReference type="ChEBI" id="CHEBI:24875"/>
    </cofactor>
    <text evidence="1">Binds 1 Fe cation per subunit.</text>
</comment>
<comment type="cofactor">
    <cofactor evidence="1">
        <name>Zn(2+)</name>
        <dbReference type="ChEBI" id="CHEBI:29105"/>
    </cofactor>
    <text evidence="1">Binds 1 zinc ion per subunit.</text>
</comment>
<comment type="subunit">
    <text evidence="1">Homodimer.</text>
</comment>
<comment type="subcellular location">
    <subcellularLocation>
        <location evidence="1">Secreted</location>
    </subcellularLocation>
</comment>
<comment type="alternative products">
    <event type="alternative splicing"/>
    <isoform>
        <id>Q84LR6-1</id>
        <name>1</name>
        <sequence type="displayed"/>
    </isoform>
    <isoform>
        <id>Q84LR6-2</id>
        <name>2</name>
        <sequence type="described" ref="VSP_037199"/>
    </isoform>
    <isoform>
        <id>Q84LR6-3</id>
        <name>3</name>
        <sequence type="described" ref="VSP_037198"/>
    </isoform>
</comment>
<comment type="tissue specificity">
    <text evidence="3">Specifically expressed in flowers.</text>
</comment>
<comment type="similarity">
    <text evidence="6">Belongs to the metallophosphoesterase superfamily. Purple acid phosphatase family.</text>
</comment>
<comment type="caution">
    <text evidence="6">Lacks the conserved His residue essential for phosphatase activity. Its enzyme activity is therefore unsure.</text>
</comment>
<comment type="sequence caution" evidence="6">
    <conflict type="erroneous gene model prediction">
        <sequence resource="EMBL-CDS" id="AAC34232"/>
    </conflict>
</comment>
<comment type="sequence caution" evidence="6">
    <conflict type="erroneous gene model prediction">
        <sequence resource="EMBL-CDS" id="AAM15023"/>
    </conflict>
</comment>
<accession>Q84LR6</accession>
<accession>Q5MAV1</accession>
<accession>Q84LR5</accession>
<accession>Q9SLM3</accession>
<proteinExistence type="evidence at transcript level"/>
<name>PPA14_ARATH</name>
<evidence type="ECO:0000250" key="1"/>
<evidence type="ECO:0000255" key="2"/>
<evidence type="ECO:0000269" key="3">
    <source>
    </source>
</evidence>
<evidence type="ECO:0000303" key="4">
    <source>
    </source>
</evidence>
<evidence type="ECO:0000303" key="5">
    <source>
    </source>
</evidence>
<evidence type="ECO:0000305" key="6"/>
<keyword id="KW-0025">Alternative splicing</keyword>
<keyword id="KW-0325">Glycoprotein</keyword>
<keyword id="KW-0408">Iron</keyword>
<keyword id="KW-0479">Metal-binding</keyword>
<keyword id="KW-1185">Reference proteome</keyword>
<keyword id="KW-0964">Secreted</keyword>
<keyword id="KW-0732">Signal</keyword>
<keyword id="KW-0862">Zinc</keyword>
<gene>
    <name type="primary">PAP14</name>
    <name type="ordered locus">At2g46880</name>
    <name type="ORF">F14M4.29</name>
</gene>
<feature type="signal peptide" evidence="2">
    <location>
        <begin position="1"/>
        <end position="30"/>
    </location>
</feature>
<feature type="chain" id="PRO_0000372818" description="Probable inactive purple acid phosphatase 14">
    <location>
        <begin position="31"/>
        <end position="401"/>
    </location>
</feature>
<feature type="binding site" evidence="1">
    <location>
        <position position="197"/>
    </location>
    <ligand>
        <name>substrate</name>
    </ligand>
</feature>
<feature type="binding site" evidence="1">
    <location>
        <position position="197"/>
    </location>
    <ligand>
        <name>Zn(2+)</name>
        <dbReference type="ChEBI" id="CHEBI:29105"/>
    </ligand>
</feature>
<feature type="binding site" evidence="1">
    <location>
        <position position="256"/>
    </location>
    <ligand>
        <name>Zn(2+)</name>
        <dbReference type="ChEBI" id="CHEBI:29105"/>
    </ligand>
</feature>
<feature type="binding site" evidence="1">
    <location>
        <begin position="305"/>
        <end position="307"/>
    </location>
    <ligand>
        <name>substrate</name>
    </ligand>
</feature>
<feature type="binding site" evidence="1">
    <location>
        <position position="305"/>
    </location>
    <ligand>
        <name>Zn(2+)</name>
        <dbReference type="ChEBI" id="CHEBI:29105"/>
    </ligand>
</feature>
<feature type="binding site" evidence="1">
    <location>
        <position position="307"/>
    </location>
    <ligand>
        <name>Fe cation</name>
        <dbReference type="ChEBI" id="CHEBI:24875"/>
    </ligand>
</feature>
<feature type="glycosylation site" description="N-linked (GlcNAc...) asparagine" evidence="2">
    <location>
        <position position="79"/>
    </location>
</feature>
<feature type="glycosylation site" description="N-linked (GlcNAc...) asparagine" evidence="2">
    <location>
        <position position="246"/>
    </location>
</feature>
<feature type="glycosylation site" description="N-linked (GlcNAc...) asparagine" evidence="2">
    <location>
        <position position="266"/>
    </location>
</feature>
<feature type="glycosylation site" description="N-linked (GlcNAc...) asparagine" evidence="2">
    <location>
        <position position="371"/>
    </location>
</feature>
<feature type="glycosylation site" description="N-linked (GlcNAc...) asparagine" evidence="2">
    <location>
        <position position="384"/>
    </location>
</feature>
<feature type="splice variant" id="VSP_037198" description="In isoform 3." evidence="4">
    <location>
        <begin position="328"/>
        <end position="401"/>
    </location>
</feature>
<feature type="splice variant" id="VSP_037199" description="In isoform 2." evidence="5">
    <original>TLEPNFGFSCSTIPQH</original>
    <variation>SK</variation>
    <location>
        <begin position="386"/>
        <end position="401"/>
    </location>
</feature>
<feature type="sequence conflict" description="In Ref. 1; AAW29948." evidence="6" ref="1">
    <original>K</original>
    <variation>E</variation>
    <location>
        <position position="92"/>
    </location>
</feature>
<reference key="1">
    <citation type="journal article" date="2005" name="Plant Mol. Biol.">
        <title>Expression patterns of purple acid phosphatase genes in Arabidopsis organs and functional analysis of AtPAP23 predominantly transcribed in flower.</title>
        <authorList>
            <person name="Zhu H."/>
            <person name="Qian W."/>
            <person name="Lu X."/>
            <person name="Li D."/>
            <person name="Liu X."/>
            <person name="Liu K."/>
            <person name="Wang D."/>
        </authorList>
    </citation>
    <scope>NUCLEOTIDE SEQUENCE [MRNA] (ISOFORM 2)</scope>
    <scope>TISSUE SPECIFICITY</scope>
    <source>
        <strain>cv. Columbia</strain>
    </source>
</reference>
<reference key="2">
    <citation type="journal article" date="1999" name="Nature">
        <title>Sequence and analysis of chromosome 2 of the plant Arabidopsis thaliana.</title>
        <authorList>
            <person name="Lin X."/>
            <person name="Kaul S."/>
            <person name="Rounsley S.D."/>
            <person name="Shea T.P."/>
            <person name="Benito M.-I."/>
            <person name="Town C.D."/>
            <person name="Fujii C.Y."/>
            <person name="Mason T.M."/>
            <person name="Bowman C.L."/>
            <person name="Barnstead M.E."/>
            <person name="Feldblyum T.V."/>
            <person name="Buell C.R."/>
            <person name="Ketchum K.A."/>
            <person name="Lee J.J."/>
            <person name="Ronning C.M."/>
            <person name="Koo H.L."/>
            <person name="Moffat K.S."/>
            <person name="Cronin L.A."/>
            <person name="Shen M."/>
            <person name="Pai G."/>
            <person name="Van Aken S."/>
            <person name="Umayam L."/>
            <person name="Tallon L.J."/>
            <person name="Gill J.E."/>
            <person name="Adams M.D."/>
            <person name="Carrera A.J."/>
            <person name="Creasy T.H."/>
            <person name="Goodman H.M."/>
            <person name="Somerville C.R."/>
            <person name="Copenhaver G.P."/>
            <person name="Preuss D."/>
            <person name="Nierman W.C."/>
            <person name="White O."/>
            <person name="Eisen J.A."/>
            <person name="Salzberg S.L."/>
            <person name="Fraser C.M."/>
            <person name="Venter J.C."/>
        </authorList>
    </citation>
    <scope>NUCLEOTIDE SEQUENCE [LARGE SCALE GENOMIC DNA]</scope>
    <source>
        <strain>cv. Columbia</strain>
    </source>
</reference>
<reference key="3">
    <citation type="journal article" date="2017" name="Plant J.">
        <title>Araport11: a complete reannotation of the Arabidopsis thaliana reference genome.</title>
        <authorList>
            <person name="Cheng C.Y."/>
            <person name="Krishnakumar V."/>
            <person name="Chan A.P."/>
            <person name="Thibaud-Nissen F."/>
            <person name="Schobel S."/>
            <person name="Town C.D."/>
        </authorList>
    </citation>
    <scope>GENOME REANNOTATION</scope>
    <source>
        <strain>cv. Columbia</strain>
    </source>
</reference>
<reference key="4">
    <citation type="journal article" date="2002" name="Plant Physiol.">
        <title>Cloning and sequencing of cDNAs for hypothetical genes from chromosome 2 of Arabidopsis.</title>
        <authorList>
            <person name="Xiao Y.-L."/>
            <person name="Malik M."/>
            <person name="Whitelaw C.A."/>
            <person name="Town C.D."/>
        </authorList>
    </citation>
    <scope>NUCLEOTIDE SEQUENCE [LARGE SCALE MRNA] (ISOFORMS 1 AND 3)</scope>
    <source>
        <strain>cv. Columbia</strain>
    </source>
</reference>
<reference key="5">
    <citation type="submission" date="2004-06" db="EMBL/GenBank/DDBJ databases">
        <authorList>
            <person name="Underwood B.A."/>
            <person name="Xiao Y.-L."/>
            <person name="Moskal W.A. Jr."/>
            <person name="Monaghan E.L."/>
            <person name="Wang W."/>
            <person name="Redman J.C."/>
            <person name="Wu H.C."/>
            <person name="Utterback T."/>
            <person name="Town C.D."/>
        </authorList>
    </citation>
    <scope>NUCLEOTIDE SEQUENCE [LARGE SCALE MRNA] (ISOFORM 1)</scope>
    <source>
        <strain>cv. Columbia</strain>
    </source>
</reference>
<reference key="6">
    <citation type="journal article" date="2002" name="J. Biol. Chem.">
        <title>Purple acid phosphatases of Arabidopsis thaliana. Comparative analysis and differential regulation by phosphate deprivation.</title>
        <authorList>
            <person name="Li D."/>
            <person name="Zhu H."/>
            <person name="Liu K."/>
            <person name="Liu X."/>
            <person name="Leggewie G."/>
            <person name="Udvardi M."/>
            <person name="Wang D."/>
        </authorList>
    </citation>
    <scope>GENE FAMILY</scope>
    <scope>NOMENCLATURE</scope>
</reference>